<dbReference type="EMBL" id="AM411372">
    <property type="protein sequence ID" value="CAL69613.1"/>
    <property type="molecule type" value="mRNA"/>
</dbReference>
<dbReference type="SMR" id="A8Y7P5"/>
<dbReference type="GO" id="GO:0005615">
    <property type="term" value="C:extracellular space"/>
    <property type="evidence" value="ECO:0007669"/>
    <property type="project" value="TreeGrafter"/>
</dbReference>
<dbReference type="GO" id="GO:0004867">
    <property type="term" value="F:serine-type endopeptidase inhibitor activity"/>
    <property type="evidence" value="ECO:0007669"/>
    <property type="project" value="UniProtKB-KW"/>
</dbReference>
<dbReference type="CDD" id="cd22608">
    <property type="entry name" value="Kunitz_PPTI-like"/>
    <property type="match status" value="1"/>
</dbReference>
<dbReference type="FunFam" id="4.10.410.10:FF:000021">
    <property type="entry name" value="Serine protease inhibitor, putative"/>
    <property type="match status" value="1"/>
</dbReference>
<dbReference type="Gene3D" id="4.10.410.10">
    <property type="entry name" value="Pancreatic trypsin inhibitor Kunitz domain"/>
    <property type="match status" value="1"/>
</dbReference>
<dbReference type="InterPro" id="IPR002223">
    <property type="entry name" value="Kunitz_BPTI"/>
</dbReference>
<dbReference type="InterPro" id="IPR036880">
    <property type="entry name" value="Kunitz_BPTI_sf"/>
</dbReference>
<dbReference type="InterPro" id="IPR020901">
    <property type="entry name" value="Prtase_inh_Kunz-CS"/>
</dbReference>
<dbReference type="InterPro" id="IPR050098">
    <property type="entry name" value="TFPI/VKTCI-like"/>
</dbReference>
<dbReference type="PANTHER" id="PTHR10083">
    <property type="entry name" value="KUNITZ-TYPE PROTEASE INHIBITOR-RELATED"/>
    <property type="match status" value="1"/>
</dbReference>
<dbReference type="PANTHER" id="PTHR10083:SF376">
    <property type="entry name" value="SERINE PEPTIDASE INHIBITOR, KUNITZ TYPE, 3"/>
    <property type="match status" value="1"/>
</dbReference>
<dbReference type="Pfam" id="PF00014">
    <property type="entry name" value="Kunitz_BPTI"/>
    <property type="match status" value="1"/>
</dbReference>
<dbReference type="PRINTS" id="PR00759">
    <property type="entry name" value="BASICPTASE"/>
</dbReference>
<dbReference type="SMART" id="SM00131">
    <property type="entry name" value="KU"/>
    <property type="match status" value="1"/>
</dbReference>
<dbReference type="SUPFAM" id="SSF57362">
    <property type="entry name" value="BPTI-like"/>
    <property type="match status" value="1"/>
</dbReference>
<dbReference type="PROSITE" id="PS00280">
    <property type="entry name" value="BPTI_KUNITZ_1"/>
    <property type="match status" value="1"/>
</dbReference>
<dbReference type="PROSITE" id="PS50279">
    <property type="entry name" value="BPTI_KUNITZ_2"/>
    <property type="match status" value="1"/>
</dbReference>
<name>VKTB5_DABSI</name>
<keyword id="KW-1015">Disulfide bond</keyword>
<keyword id="KW-0646">Protease inhibitor</keyword>
<keyword id="KW-0964">Secreted</keyword>
<keyword id="KW-0722">Serine protease inhibitor</keyword>
<keyword id="KW-0732">Signal</keyword>
<reference key="1">
    <citation type="journal article" date="2013" name="Peptides">
        <title>Purification, characterization and molecular cloning of chymotrypsin inhibitor peptides from the venom of Burmese Daboia russelli siamensis.</title>
        <authorList>
            <person name="Guo C.T."/>
            <person name="McClean S."/>
            <person name="Shaw C."/>
            <person name="Rao P.F."/>
            <person name="Ye M.Y."/>
            <person name="Bjourson A.J."/>
        </authorList>
    </citation>
    <scope>NUCLEOTIDE SEQUENCE [MRNA]</scope>
    <source>
        <strain>Myanmar</strain>
        <tissue>Venom gland</tissue>
    </source>
</reference>
<sequence>MSSGGLLLLLGLLTLWAELTPISGHDRPKFCYLPADPGECLAHMRSFYYDSESKKCKEFIYGGCHGNANKFPSRDKCRQTCGASAKGRPT</sequence>
<comment type="function">
    <text evidence="1">Serine protease inhibitor.</text>
</comment>
<comment type="subcellular location">
    <subcellularLocation>
        <location evidence="1">Secreted</location>
    </subcellularLocation>
</comment>
<comment type="tissue specificity">
    <text>Expressed by the venom gland.</text>
</comment>
<comment type="similarity">
    <text evidence="4">Belongs to the venom Kunitz-type family.</text>
</comment>
<evidence type="ECO:0000250" key="1"/>
<evidence type="ECO:0000255" key="2"/>
<evidence type="ECO:0000255" key="3">
    <source>
        <dbReference type="PROSITE-ProRule" id="PRU00031"/>
    </source>
</evidence>
<evidence type="ECO:0000305" key="4"/>
<proteinExistence type="evidence at transcript level"/>
<protein>
    <recommendedName>
        <fullName>Kunitz-type serine protease inhibitor B5</fullName>
    </recommendedName>
    <alternativeName>
        <fullName>BBPTI-5</fullName>
        <shortName>BPTI-5</shortName>
    </alternativeName>
    <alternativeName>
        <fullName>Trypsin inhibitor 5</fullName>
    </alternativeName>
    <alternativeName>
        <fullName>Trypsin inhibitor B5</fullName>
    </alternativeName>
</protein>
<feature type="signal peptide" evidence="1">
    <location>
        <begin position="1"/>
        <end position="24"/>
    </location>
</feature>
<feature type="chain" id="PRO_5000284438" description="Kunitz-type serine protease inhibitor B5">
    <location>
        <begin position="25"/>
        <end position="84"/>
    </location>
</feature>
<feature type="propeptide" id="PRO_0000377469" evidence="2">
    <location>
        <begin position="85"/>
        <end position="90"/>
    </location>
</feature>
<feature type="domain" description="BPTI/Kunitz inhibitor" evidence="3">
    <location>
        <begin position="31"/>
        <end position="81"/>
    </location>
</feature>
<feature type="site" description="Reactive bond for chymotrypsin" evidence="1">
    <location>
        <begin position="41"/>
        <end position="42"/>
    </location>
</feature>
<feature type="disulfide bond" evidence="3">
    <location>
        <begin position="31"/>
        <end position="81"/>
    </location>
</feature>
<feature type="disulfide bond" evidence="3">
    <location>
        <begin position="40"/>
        <end position="64"/>
    </location>
</feature>
<feature type="disulfide bond" evidence="3">
    <location>
        <begin position="56"/>
        <end position="77"/>
    </location>
</feature>
<accession>A8Y7P5</accession>
<organism>
    <name type="scientific">Daboia siamensis</name>
    <name type="common">Eastern Russel's viper</name>
    <name type="synonym">Daboia russelii siamensis</name>
    <dbReference type="NCBI Taxonomy" id="343250"/>
    <lineage>
        <taxon>Eukaryota</taxon>
        <taxon>Metazoa</taxon>
        <taxon>Chordata</taxon>
        <taxon>Craniata</taxon>
        <taxon>Vertebrata</taxon>
        <taxon>Euteleostomi</taxon>
        <taxon>Lepidosauria</taxon>
        <taxon>Squamata</taxon>
        <taxon>Bifurcata</taxon>
        <taxon>Unidentata</taxon>
        <taxon>Episquamata</taxon>
        <taxon>Toxicofera</taxon>
        <taxon>Serpentes</taxon>
        <taxon>Colubroidea</taxon>
        <taxon>Viperidae</taxon>
        <taxon>Viperinae</taxon>
        <taxon>Daboia</taxon>
    </lineage>
</organism>